<organism>
    <name type="scientific">Yersinia pseudotuberculosis serotype I (strain IP32953)</name>
    <dbReference type="NCBI Taxonomy" id="273123"/>
    <lineage>
        <taxon>Bacteria</taxon>
        <taxon>Pseudomonadati</taxon>
        <taxon>Pseudomonadota</taxon>
        <taxon>Gammaproteobacteria</taxon>
        <taxon>Enterobacterales</taxon>
        <taxon>Yersiniaceae</taxon>
        <taxon>Yersinia</taxon>
    </lineage>
</organism>
<evidence type="ECO:0000255" key="1">
    <source>
        <dbReference type="HAMAP-Rule" id="MF_00262"/>
    </source>
</evidence>
<dbReference type="EMBL" id="BX936398">
    <property type="protein sequence ID" value="CAH21297.1"/>
    <property type="molecule type" value="Genomic_DNA"/>
</dbReference>
<dbReference type="RefSeq" id="WP_002211180.1">
    <property type="nucleotide sequence ID" value="NZ_CP009712.1"/>
</dbReference>
<dbReference type="SMR" id="Q66AS1"/>
<dbReference type="GeneID" id="97456410"/>
<dbReference type="KEGG" id="ypo:BZ17_405"/>
<dbReference type="KEGG" id="yps:YPTB2059"/>
<dbReference type="PATRIC" id="fig|273123.14.peg.433"/>
<dbReference type="Proteomes" id="UP000001011">
    <property type="component" value="Chromosome"/>
</dbReference>
<dbReference type="GO" id="GO:0051301">
    <property type="term" value="P:cell division"/>
    <property type="evidence" value="ECO:0007669"/>
    <property type="project" value="UniProtKB-KW"/>
</dbReference>
<dbReference type="GO" id="GO:0032955">
    <property type="term" value="P:regulation of division septum assembly"/>
    <property type="evidence" value="ECO:0007669"/>
    <property type="project" value="InterPro"/>
</dbReference>
<dbReference type="FunFam" id="3.30.1070.10:FF:000001">
    <property type="entry name" value="Cell division topological specificity factor"/>
    <property type="match status" value="1"/>
</dbReference>
<dbReference type="Gene3D" id="3.30.1070.10">
    <property type="entry name" value="Cell division topological specificity factor MinE"/>
    <property type="match status" value="1"/>
</dbReference>
<dbReference type="HAMAP" id="MF_00262">
    <property type="entry name" value="MinE"/>
    <property type="match status" value="1"/>
</dbReference>
<dbReference type="InterPro" id="IPR005527">
    <property type="entry name" value="MinE"/>
</dbReference>
<dbReference type="InterPro" id="IPR036707">
    <property type="entry name" value="MinE_sf"/>
</dbReference>
<dbReference type="NCBIfam" id="TIGR01215">
    <property type="entry name" value="minE"/>
    <property type="match status" value="1"/>
</dbReference>
<dbReference type="NCBIfam" id="NF001422">
    <property type="entry name" value="PRK00296.1"/>
    <property type="match status" value="1"/>
</dbReference>
<dbReference type="Pfam" id="PF03776">
    <property type="entry name" value="MinE"/>
    <property type="match status" value="1"/>
</dbReference>
<dbReference type="SUPFAM" id="SSF55229">
    <property type="entry name" value="Cell division protein MinE topological specificity domain"/>
    <property type="match status" value="1"/>
</dbReference>
<keyword id="KW-0131">Cell cycle</keyword>
<keyword id="KW-0132">Cell division</keyword>
<reference key="1">
    <citation type="journal article" date="2004" name="Proc. Natl. Acad. Sci. U.S.A.">
        <title>Insights into the evolution of Yersinia pestis through whole-genome comparison with Yersinia pseudotuberculosis.</title>
        <authorList>
            <person name="Chain P.S.G."/>
            <person name="Carniel E."/>
            <person name="Larimer F.W."/>
            <person name="Lamerdin J."/>
            <person name="Stoutland P.O."/>
            <person name="Regala W.M."/>
            <person name="Georgescu A.M."/>
            <person name="Vergez L.M."/>
            <person name="Land M.L."/>
            <person name="Motin V.L."/>
            <person name="Brubaker R.R."/>
            <person name="Fowler J."/>
            <person name="Hinnebusch J."/>
            <person name="Marceau M."/>
            <person name="Medigue C."/>
            <person name="Simonet M."/>
            <person name="Chenal-Francisque V."/>
            <person name="Souza B."/>
            <person name="Dacheux D."/>
            <person name="Elliott J.M."/>
            <person name="Derbise A."/>
            <person name="Hauser L.J."/>
            <person name="Garcia E."/>
        </authorList>
    </citation>
    <scope>NUCLEOTIDE SEQUENCE [LARGE SCALE GENOMIC DNA]</scope>
    <source>
        <strain>IP32953</strain>
    </source>
</reference>
<sequence length="89" mass="10332">MALLDFFLSRKKPTANIAKERLQIIVAERRRGDSEPHYLPDLKRDILAVICKYIQIDPEMLHVQFEQKGDDISVLELNVTLPETEETPK</sequence>
<proteinExistence type="inferred from homology"/>
<gene>
    <name evidence="1" type="primary">minE</name>
    <name type="ordered locus">YPTB2059</name>
</gene>
<feature type="chain" id="PRO_0000298226" description="Cell division topological specificity factor">
    <location>
        <begin position="1"/>
        <end position="89"/>
    </location>
</feature>
<protein>
    <recommendedName>
        <fullName evidence="1">Cell division topological specificity factor</fullName>
    </recommendedName>
</protein>
<comment type="function">
    <text evidence="1">Prevents the cell division inhibition by proteins MinC and MinD at internal division sites while permitting inhibition at polar sites. This ensures cell division at the proper site by restricting the formation of a division septum at the midpoint of the long axis of the cell.</text>
</comment>
<comment type="similarity">
    <text evidence="1">Belongs to the MinE family.</text>
</comment>
<accession>Q66AS1</accession>
<name>MINE_YERPS</name>